<dbReference type="EMBL" id="Z73633">
    <property type="protein sequence ID" value="CAA98014.1"/>
    <property type="molecule type" value="Genomic_DNA"/>
</dbReference>
<dbReference type="EMBL" id="BK006949">
    <property type="protein sequence ID" value="DAA11161.1"/>
    <property type="molecule type" value="Genomic_DNA"/>
</dbReference>
<dbReference type="PIR" id="S65310">
    <property type="entry name" value="S65310"/>
</dbReference>
<dbReference type="RefSeq" id="NP_015046.1">
    <property type="nucleotide sequence ID" value="NM_001184091.1"/>
</dbReference>
<dbReference type="BioGRID" id="35938">
    <property type="interactions" value="19"/>
</dbReference>
<dbReference type="FunCoup" id="Q08989">
    <property type="interactions" value="39"/>
</dbReference>
<dbReference type="IntAct" id="Q08989">
    <property type="interactions" value="4"/>
</dbReference>
<dbReference type="MINT" id="Q08989"/>
<dbReference type="STRING" id="4932.YPL277C"/>
<dbReference type="GlyGen" id="Q08989">
    <property type="glycosylation" value="8 sites"/>
</dbReference>
<dbReference type="PaxDb" id="4932-YPL277C"/>
<dbReference type="PeptideAtlas" id="Q08989"/>
<dbReference type="EnsemblFungi" id="YPL277C_mRNA">
    <property type="protein sequence ID" value="YPL277C"/>
    <property type="gene ID" value="YPL277C"/>
</dbReference>
<dbReference type="GeneID" id="855852"/>
<dbReference type="KEGG" id="sce:YPL277C"/>
<dbReference type="AGR" id="SGD:S000006198"/>
<dbReference type="SGD" id="S000006198">
    <property type="gene designation" value="YPL277C"/>
</dbReference>
<dbReference type="VEuPathDB" id="FungiDB:YPL277C"/>
<dbReference type="eggNOG" id="ENOG502QRJE">
    <property type="taxonomic scope" value="Eukaryota"/>
</dbReference>
<dbReference type="GeneTree" id="ENSGT00940000176428"/>
<dbReference type="HOGENOM" id="CLU_017366_3_1_1"/>
<dbReference type="InParanoid" id="Q08989"/>
<dbReference type="OrthoDB" id="10261782at2759"/>
<dbReference type="BioCyc" id="YEAST:G3O-34158-MONOMER"/>
<dbReference type="BioGRID-ORCS" id="855852">
    <property type="hits" value="1 hit in 10 CRISPR screens"/>
</dbReference>
<dbReference type="PRO" id="PR:Q08989"/>
<dbReference type="Proteomes" id="UP000002311">
    <property type="component" value="Chromosome XVI"/>
</dbReference>
<dbReference type="RNAct" id="Q08989">
    <property type="molecule type" value="protein"/>
</dbReference>
<dbReference type="GO" id="GO:0016020">
    <property type="term" value="C:membrane"/>
    <property type="evidence" value="ECO:0000314"/>
    <property type="project" value="SGD"/>
</dbReference>
<dbReference type="InterPro" id="IPR038921">
    <property type="entry name" value="YOR389W-like"/>
</dbReference>
<dbReference type="PANTHER" id="PTHR35204:SF1">
    <property type="entry name" value="ENTEROTOXIN"/>
    <property type="match status" value="1"/>
</dbReference>
<dbReference type="PANTHER" id="PTHR35204">
    <property type="entry name" value="YALI0A21131P"/>
    <property type="match status" value="1"/>
</dbReference>
<feature type="signal peptide" evidence="1">
    <location>
        <begin position="1"/>
        <end position="31"/>
    </location>
</feature>
<feature type="chain" id="PRO_0000269760" description="Uncharacterized protein YPL277C">
    <location>
        <begin position="32"/>
        <end position="487"/>
    </location>
</feature>
<feature type="region of interest" description="Disordered" evidence="2">
    <location>
        <begin position="141"/>
        <end position="176"/>
    </location>
</feature>
<feature type="glycosylation site" description="N-linked (GlcNAc...) asparagine" evidence="1">
    <location>
        <position position="40"/>
    </location>
</feature>
<feature type="glycosylation site" description="N-linked (GlcNAc...) asparagine" evidence="1">
    <location>
        <position position="68"/>
    </location>
</feature>
<feature type="glycosylation site" description="N-linked (GlcNAc...) asparagine" evidence="1">
    <location>
        <position position="150"/>
    </location>
</feature>
<feature type="glycosylation site" description="N-linked (GlcNAc...) asparagine" evidence="1">
    <location>
        <position position="220"/>
    </location>
</feature>
<feature type="glycosylation site" description="N-linked (GlcNAc...) asparagine" evidence="1">
    <location>
        <position position="304"/>
    </location>
</feature>
<feature type="glycosylation site" description="N-linked (GlcNAc...) asparagine" evidence="1">
    <location>
        <position position="367"/>
    </location>
</feature>
<feature type="glycosylation site" description="N-linked (GlcNAc...) asparagine" evidence="1">
    <location>
        <position position="442"/>
    </location>
</feature>
<feature type="glycosylation site" description="N-linked (GlcNAc...) asparagine" evidence="1">
    <location>
        <position position="448"/>
    </location>
</feature>
<proteinExistence type="evidence at protein level"/>
<evidence type="ECO:0000255" key="1"/>
<evidence type="ECO:0000256" key="2">
    <source>
        <dbReference type="SAM" id="MobiDB-lite"/>
    </source>
</evidence>
<evidence type="ECO:0000269" key="3">
    <source>
    </source>
</evidence>
<organism>
    <name type="scientific">Saccharomyces cerevisiae (strain ATCC 204508 / S288c)</name>
    <name type="common">Baker's yeast</name>
    <dbReference type="NCBI Taxonomy" id="559292"/>
    <lineage>
        <taxon>Eukaryota</taxon>
        <taxon>Fungi</taxon>
        <taxon>Dikarya</taxon>
        <taxon>Ascomycota</taxon>
        <taxon>Saccharomycotina</taxon>
        <taxon>Saccharomycetes</taxon>
        <taxon>Saccharomycetales</taxon>
        <taxon>Saccharomycetaceae</taxon>
        <taxon>Saccharomyces</taxon>
    </lineage>
</organism>
<comment type="interaction">
    <interactant intactId="EBI-38031">
        <id>Q08989</id>
    </interactant>
    <interactant intactId="EBI-3889">
        <id>P38822</id>
        <label>BZZ1</label>
    </interactant>
    <organismsDiffer>false</organismsDiffer>
    <experiments>2</experiments>
</comment>
<comment type="PTM">
    <text evidence="3">N-glycosylated.</text>
</comment>
<gene>
    <name type="ordered locus">YPL277C</name>
</gene>
<protein>
    <recommendedName>
        <fullName>Uncharacterized protein YPL277C</fullName>
    </recommendedName>
</protein>
<name>YP277_YEAST</name>
<sequence length="487" mass="54538">MRFHRQGISAIIGVLLIVLLGFCWKLSGSYGIVSTALPHNQSAIKSTDLPSIRWDNYHEFVRDIDFDNSTAIFNSIRAALRQSPSDIHPVGVSYFPAVIPKGTLMYHAGSKVPTTFEWLAMDHEFSYSFGLRSPSYGRKSLERRHGRFGNGTNGDHPKGPPPPPPPPDEKGRGSQKMLTYRAARDLNKFLYLDGASAAKTDSGEMDTQLMLSNVIKEKLNLTDDGENERMAERLYAARICKWGKPFGLDGIIRVEVGFEVVLCDFSADNVELVSMLEMVQPNQYLGLPAPTVISKEEGWPLDENGSLVEDQLTDDQKAILEREDGWEKAFSNFNAVKSFNQLRAGAAHDNGEHRIHIDYRYLVSGINRTYIAPDPNNRRLLDEGMTWEKQLDMVDDLEKALEVGFDATQSMDWQLAFDELVLKFAPLLKSVSNILNSDGDINESIAINATALTLNFCLPICEPIPGLKNGCRLFDLVICCQRCRRNC</sequence>
<reference key="1">
    <citation type="journal article" date="1997" name="Nature">
        <title>The nucleotide sequence of Saccharomyces cerevisiae chromosome XVI.</title>
        <authorList>
            <person name="Bussey H."/>
            <person name="Storms R.K."/>
            <person name="Ahmed A."/>
            <person name="Albermann K."/>
            <person name="Allen E."/>
            <person name="Ansorge W."/>
            <person name="Araujo R."/>
            <person name="Aparicio A."/>
            <person name="Barrell B.G."/>
            <person name="Badcock K."/>
            <person name="Benes V."/>
            <person name="Botstein D."/>
            <person name="Bowman S."/>
            <person name="Brueckner M."/>
            <person name="Carpenter J."/>
            <person name="Cherry J.M."/>
            <person name="Chung E."/>
            <person name="Churcher C.M."/>
            <person name="Coster F."/>
            <person name="Davis K."/>
            <person name="Davis R.W."/>
            <person name="Dietrich F.S."/>
            <person name="Delius H."/>
            <person name="DiPaolo T."/>
            <person name="Dubois E."/>
            <person name="Duesterhoeft A."/>
            <person name="Duncan M."/>
            <person name="Floeth M."/>
            <person name="Fortin N."/>
            <person name="Friesen J.D."/>
            <person name="Fritz C."/>
            <person name="Goffeau A."/>
            <person name="Hall J."/>
            <person name="Hebling U."/>
            <person name="Heumann K."/>
            <person name="Hilbert H."/>
            <person name="Hillier L.W."/>
            <person name="Hunicke-Smith S."/>
            <person name="Hyman R.W."/>
            <person name="Johnston M."/>
            <person name="Kalman S."/>
            <person name="Kleine K."/>
            <person name="Komp C."/>
            <person name="Kurdi O."/>
            <person name="Lashkari D."/>
            <person name="Lew H."/>
            <person name="Lin A."/>
            <person name="Lin D."/>
            <person name="Louis E.J."/>
            <person name="Marathe R."/>
            <person name="Messenguy F."/>
            <person name="Mewes H.-W."/>
            <person name="Mirtipati S."/>
            <person name="Moestl D."/>
            <person name="Mueller-Auer S."/>
            <person name="Namath A."/>
            <person name="Nentwich U."/>
            <person name="Oefner P."/>
            <person name="Pearson D."/>
            <person name="Petel F.X."/>
            <person name="Pohl T.M."/>
            <person name="Purnelle B."/>
            <person name="Rajandream M.A."/>
            <person name="Rechmann S."/>
            <person name="Rieger M."/>
            <person name="Riles L."/>
            <person name="Roberts D."/>
            <person name="Schaefer M."/>
            <person name="Scharfe M."/>
            <person name="Scherens B."/>
            <person name="Schramm S."/>
            <person name="Schroeder M."/>
            <person name="Sdicu A.-M."/>
            <person name="Tettelin H."/>
            <person name="Urrestarazu L.A."/>
            <person name="Ushinsky S."/>
            <person name="Vierendeels F."/>
            <person name="Vissers S."/>
            <person name="Voss H."/>
            <person name="Walsh S.V."/>
            <person name="Wambutt R."/>
            <person name="Wang Y."/>
            <person name="Wedler E."/>
            <person name="Wedler H."/>
            <person name="Winnett E."/>
            <person name="Zhong W.-W."/>
            <person name="Zollner A."/>
            <person name="Vo D.H."/>
            <person name="Hani J."/>
        </authorList>
    </citation>
    <scope>NUCLEOTIDE SEQUENCE [LARGE SCALE GENOMIC DNA]</scope>
    <source>
        <strain>ATCC 204508 / S288c</strain>
    </source>
</reference>
<reference key="2">
    <citation type="journal article" date="2014" name="G3 (Bethesda)">
        <title>The reference genome sequence of Saccharomyces cerevisiae: Then and now.</title>
        <authorList>
            <person name="Engel S.R."/>
            <person name="Dietrich F.S."/>
            <person name="Fisk D.G."/>
            <person name="Binkley G."/>
            <person name="Balakrishnan R."/>
            <person name="Costanzo M.C."/>
            <person name="Dwight S.S."/>
            <person name="Hitz B.C."/>
            <person name="Karra K."/>
            <person name="Nash R.S."/>
            <person name="Weng S."/>
            <person name="Wong E.D."/>
            <person name="Lloyd P."/>
            <person name="Skrzypek M.S."/>
            <person name="Miyasato S.R."/>
            <person name="Simison M."/>
            <person name="Cherry J.M."/>
        </authorList>
    </citation>
    <scope>GENOME REANNOTATION</scope>
    <source>
        <strain>ATCC 204508 / S288c</strain>
    </source>
</reference>
<reference key="3">
    <citation type="journal article" date="2009" name="Mol. Syst. Biol.">
        <title>Global analysis of the glycoproteome in Saccharomyces cerevisiae reveals new roles for protein glycosylation in eukaryotes.</title>
        <authorList>
            <person name="Kung L.A."/>
            <person name="Tao S.-C."/>
            <person name="Qian J."/>
            <person name="Smith M.G."/>
            <person name="Snyder M."/>
            <person name="Zhu H."/>
        </authorList>
    </citation>
    <scope>GLYCOSYLATION [LARGE SCALE ANALYSIS]</scope>
</reference>
<keyword id="KW-0325">Glycoprotein</keyword>
<keyword id="KW-1185">Reference proteome</keyword>
<keyword id="KW-0732">Signal</keyword>
<accession>Q08989</accession>
<accession>D6W395</accession>